<proteinExistence type="evidence at protein level"/>
<evidence type="ECO:0000255" key="1">
    <source>
        <dbReference type="PROSITE-ProRule" id="PRU00778"/>
    </source>
</evidence>
<evidence type="ECO:0000269" key="2">
    <source>
    </source>
</evidence>
<evidence type="ECO:0000269" key="3">
    <source ref="3"/>
</evidence>
<evidence type="ECO:0000303" key="4">
    <source>
    </source>
</evidence>
<evidence type="ECO:0000305" key="5"/>
<name>FDXA1_HUMAN</name>
<accession>Q9BRP7</accession>
<accession>A0PJW7</accession>
<accession>B4DUU2</accession>
<organism>
    <name type="scientific">Homo sapiens</name>
    <name type="common">Human</name>
    <dbReference type="NCBI Taxonomy" id="9606"/>
    <lineage>
        <taxon>Eukaryota</taxon>
        <taxon>Metazoa</taxon>
        <taxon>Chordata</taxon>
        <taxon>Craniata</taxon>
        <taxon>Vertebrata</taxon>
        <taxon>Euteleostomi</taxon>
        <taxon>Mammalia</taxon>
        <taxon>Eutheria</taxon>
        <taxon>Euarchontoglires</taxon>
        <taxon>Primates</taxon>
        <taxon>Haplorrhini</taxon>
        <taxon>Catarrhini</taxon>
        <taxon>Hominidae</taxon>
        <taxon>Homo</taxon>
    </lineage>
</organism>
<gene>
    <name type="primary">FDXACB1</name>
</gene>
<dbReference type="EMBL" id="AK300795">
    <property type="protein sequence ID" value="BAG62454.1"/>
    <property type="molecule type" value="mRNA"/>
</dbReference>
<dbReference type="EMBL" id="AP001781">
    <property type="status" value="NOT_ANNOTATED_CDS"/>
    <property type="molecule type" value="Genomic_DNA"/>
</dbReference>
<dbReference type="EMBL" id="CH471065">
    <property type="protein sequence ID" value="EAW67156.1"/>
    <property type="molecule type" value="Genomic_DNA"/>
</dbReference>
<dbReference type="EMBL" id="BC006136">
    <property type="protein sequence ID" value="AAH06136.1"/>
    <property type="status" value="ALT_INIT"/>
    <property type="molecule type" value="mRNA"/>
</dbReference>
<dbReference type="EMBL" id="BC127680">
    <property type="protein sequence ID" value="AAI27681.1"/>
    <property type="molecule type" value="mRNA"/>
</dbReference>
<dbReference type="CCDS" id="CCDS44729.1">
    <molecule id="Q9BRP7-1"/>
</dbReference>
<dbReference type="RefSeq" id="NP_612387.1">
    <molecule id="Q9BRP7-1"/>
    <property type="nucleotide sequence ID" value="NM_138378.3"/>
</dbReference>
<dbReference type="SMR" id="Q9BRP7"/>
<dbReference type="BioGRID" id="124890">
    <property type="interactions" value="14"/>
</dbReference>
<dbReference type="FunCoup" id="Q9BRP7">
    <property type="interactions" value="695"/>
</dbReference>
<dbReference type="IntAct" id="Q9BRP7">
    <property type="interactions" value="10"/>
</dbReference>
<dbReference type="STRING" id="9606.ENSP00000260257"/>
<dbReference type="GlyGen" id="Q9BRP7">
    <property type="glycosylation" value="1 site"/>
</dbReference>
<dbReference type="iPTMnet" id="Q9BRP7"/>
<dbReference type="PhosphoSitePlus" id="Q9BRP7"/>
<dbReference type="BioMuta" id="FDXACB1"/>
<dbReference type="DMDM" id="296439342"/>
<dbReference type="MassIVE" id="Q9BRP7"/>
<dbReference type="PaxDb" id="9606-ENSP00000260257"/>
<dbReference type="PeptideAtlas" id="Q9BRP7"/>
<dbReference type="ProteomicsDB" id="5217"/>
<dbReference type="ProteomicsDB" id="78797">
    <molecule id="Q9BRP7-1"/>
</dbReference>
<dbReference type="Antibodypedia" id="51439">
    <property type="antibodies" value="14 antibodies from 11 providers"/>
</dbReference>
<dbReference type="DNASU" id="91893"/>
<dbReference type="Ensembl" id="ENST00000260257.9">
    <molecule id="Q9BRP7-1"/>
    <property type="protein sequence ID" value="ENSP00000260257.4"/>
    <property type="gene ID" value="ENSG00000255561.7"/>
</dbReference>
<dbReference type="GeneID" id="91893"/>
<dbReference type="KEGG" id="hsa:91893"/>
<dbReference type="MANE-Select" id="ENST00000260257.9">
    <property type="protein sequence ID" value="ENSP00000260257.4"/>
    <property type="RefSeq nucleotide sequence ID" value="NM_138378.3"/>
    <property type="RefSeq protein sequence ID" value="NP_612387.1"/>
</dbReference>
<dbReference type="UCSC" id="uc001pmc.5">
    <molecule id="Q9BRP7-1"/>
    <property type="organism name" value="human"/>
</dbReference>
<dbReference type="AGR" id="HGNC:25110"/>
<dbReference type="CTD" id="91893"/>
<dbReference type="DisGeNET" id="91893"/>
<dbReference type="GeneCards" id="FDXACB1"/>
<dbReference type="HGNC" id="HGNC:25110">
    <property type="gene designation" value="FDXACB1"/>
</dbReference>
<dbReference type="HPA" id="ENSG00000255561">
    <property type="expression patterns" value="Low tissue specificity"/>
</dbReference>
<dbReference type="neXtProt" id="NX_Q9BRP7"/>
<dbReference type="OpenTargets" id="ENSG00000255561"/>
<dbReference type="PharmGKB" id="PA164720055"/>
<dbReference type="VEuPathDB" id="HostDB:ENSG00000255561"/>
<dbReference type="eggNOG" id="KOG2783">
    <property type="taxonomic scope" value="Eukaryota"/>
</dbReference>
<dbReference type="eggNOG" id="KOG4174">
    <property type="taxonomic scope" value="Eukaryota"/>
</dbReference>
<dbReference type="GeneTree" id="ENSGT00940000160701"/>
<dbReference type="HOGENOM" id="CLU_030162_0_0_1"/>
<dbReference type="InParanoid" id="Q9BRP7"/>
<dbReference type="OMA" id="IRFGVDC"/>
<dbReference type="OrthoDB" id="273345at2759"/>
<dbReference type="PAN-GO" id="Q9BRP7">
    <property type="GO annotations" value="3 GO annotations based on evolutionary models"/>
</dbReference>
<dbReference type="PhylomeDB" id="Q9BRP7"/>
<dbReference type="TreeFam" id="TF329685"/>
<dbReference type="PathwayCommons" id="Q9BRP7"/>
<dbReference type="SignaLink" id="Q9BRP7"/>
<dbReference type="BioGRID-ORCS" id="91893">
    <property type="hits" value="10 hits in 1149 CRISPR screens"/>
</dbReference>
<dbReference type="ChiTaRS" id="FDXACB1">
    <property type="organism name" value="human"/>
</dbReference>
<dbReference type="Pharos" id="Q9BRP7">
    <property type="development level" value="Tdark"/>
</dbReference>
<dbReference type="PRO" id="PR:Q9BRP7"/>
<dbReference type="Proteomes" id="UP000005640">
    <property type="component" value="Chromosome 11"/>
</dbReference>
<dbReference type="RNAct" id="Q9BRP7">
    <property type="molecule type" value="protein"/>
</dbReference>
<dbReference type="Bgee" id="ENSG00000255561">
    <property type="expression patterns" value="Expressed in primordial germ cell in gonad and 102 other cell types or tissues"/>
</dbReference>
<dbReference type="ExpressionAtlas" id="Q9BRP7">
    <property type="expression patterns" value="baseline and differential"/>
</dbReference>
<dbReference type="GO" id="GO:0005737">
    <property type="term" value="C:cytoplasm"/>
    <property type="evidence" value="ECO:0000318"/>
    <property type="project" value="GO_Central"/>
</dbReference>
<dbReference type="GO" id="GO:0070042">
    <property type="term" value="F:rRNA (uridine-N3-)-methyltransferase activity"/>
    <property type="evidence" value="ECO:0000318"/>
    <property type="project" value="GO_Central"/>
</dbReference>
<dbReference type="GO" id="GO:0070475">
    <property type="term" value="P:rRNA base methylation"/>
    <property type="evidence" value="ECO:0000318"/>
    <property type="project" value="GO_Central"/>
</dbReference>
<dbReference type="FunFam" id="3.30.930.10:FF:000081">
    <property type="entry name" value="Ferredoxin-fold anticodon binding domain containing 1"/>
    <property type="match status" value="1"/>
</dbReference>
<dbReference type="FunFam" id="3.30.70.380:FF:000004">
    <property type="entry name" value="Ferredoxin-fold anticodon-binding domain-containing protein 1 homolog"/>
    <property type="match status" value="1"/>
</dbReference>
<dbReference type="FunFam" id="3.40.50.150:FF:000361">
    <property type="entry name" value="Ferredoxin-fold anticodon-binding domain-containing protein 1 homolog"/>
    <property type="match status" value="1"/>
</dbReference>
<dbReference type="Gene3D" id="3.30.930.10">
    <property type="entry name" value="Bira Bifunctional Protein, Domain 2"/>
    <property type="match status" value="1"/>
</dbReference>
<dbReference type="Gene3D" id="3.30.70.380">
    <property type="entry name" value="Ferrodoxin-fold anticodon-binding domain"/>
    <property type="match status" value="1"/>
</dbReference>
<dbReference type="InterPro" id="IPR045864">
    <property type="entry name" value="aa-tRNA-synth_II/BPL/LPL"/>
</dbReference>
<dbReference type="InterPro" id="IPR019446">
    <property type="entry name" value="BMT5-like"/>
</dbReference>
<dbReference type="InterPro" id="IPR005121">
    <property type="entry name" value="Fdx_antiC-bd"/>
</dbReference>
<dbReference type="InterPro" id="IPR036690">
    <property type="entry name" value="Fdx_antiC-bd_sf"/>
</dbReference>
<dbReference type="PANTHER" id="PTHR11538:SF26">
    <property type="entry name" value="FERREDOXIN-FOLD ANTICODON-BINDING DOMAIN-CONTAINING PROTEIN 1"/>
    <property type="match status" value="1"/>
</dbReference>
<dbReference type="PANTHER" id="PTHR11538">
    <property type="entry name" value="PHENYLALANYL-TRNA SYNTHETASE"/>
    <property type="match status" value="1"/>
</dbReference>
<dbReference type="Pfam" id="PF10354">
    <property type="entry name" value="BMT5-like"/>
    <property type="match status" value="1"/>
</dbReference>
<dbReference type="Pfam" id="PF03147">
    <property type="entry name" value="FDX-ACB"/>
    <property type="match status" value="1"/>
</dbReference>
<dbReference type="SMART" id="SM00896">
    <property type="entry name" value="FDX-ACB"/>
    <property type="match status" value="1"/>
</dbReference>
<dbReference type="SUPFAM" id="SSF54991">
    <property type="entry name" value="Anticodon-binding domain of PheRS"/>
    <property type="match status" value="1"/>
</dbReference>
<dbReference type="PROSITE" id="PS51447">
    <property type="entry name" value="FDX_ACB"/>
    <property type="match status" value="1"/>
</dbReference>
<comment type="interaction">
    <interactant intactId="EBI-10297077">
        <id>Q9BRP7</id>
    </interactant>
    <interactant intactId="EBI-3446748">
        <id>Q9NPC7</id>
        <label>MYNN</label>
    </interactant>
    <organismsDiffer>false</organismsDiffer>
    <experiments>3</experiments>
</comment>
<comment type="interaction">
    <interactant intactId="EBI-10297077">
        <id>Q9BRP7</id>
    </interactant>
    <interactant intactId="EBI-355744">
        <id>Q12933</id>
        <label>TRAF2</label>
    </interactant>
    <organismsDiffer>false</organismsDiffer>
    <experiments>6</experiments>
</comment>
<comment type="interaction">
    <interactant intactId="EBI-10297077">
        <id>Q9BRP7</id>
    </interactant>
    <interactant intactId="EBI-10964469">
        <id>Q9UGJ1-2</id>
        <label>TUBGCP4</label>
    </interactant>
    <organismsDiffer>false</organismsDiffer>
    <experiments>3</experiments>
</comment>
<comment type="interaction">
    <interactant intactId="EBI-10297077">
        <id>Q9BRP7</id>
    </interactant>
    <interactant intactId="EBI-10177272">
        <id>P15622-3</id>
        <label>ZNF250</label>
    </interactant>
    <organismsDiffer>false</organismsDiffer>
    <experiments>3</experiments>
</comment>
<comment type="interaction">
    <interactant intactId="EBI-10297077">
        <id>Q9BRP7</id>
    </interactant>
    <interactant intactId="EBI-3919096">
        <id>Q8TBC5</id>
        <label>ZSCAN18</label>
    </interactant>
    <organismsDiffer>false</organismsDiffer>
    <experiments>3</experiments>
</comment>
<comment type="alternative products">
    <event type="alternative splicing"/>
    <isoform>
        <id>Q9BRP7-1</id>
        <name>1</name>
        <sequence type="displayed"/>
    </isoform>
    <isoform>
        <id>Q9BRP7-2</id>
        <name>2</name>
        <sequence type="described" ref="VSP_056997"/>
    </isoform>
</comment>
<comment type="sequence caution" evidence="5">
    <conflict type="erroneous initiation">
        <sequence resource="EMBL-CDS" id="AAH06136"/>
    </conflict>
    <text>Extended N-terminus.</text>
</comment>
<keyword id="KW-0025">Alternative splicing</keyword>
<keyword id="KW-1267">Proteomics identification</keyword>
<keyword id="KW-1185">Reference proteome</keyword>
<sequence length="624" mass="70416">MAPRRLLLVGEGNFSFAAALSETLDQSTQLTATCLQRPAELARDPLAWENLQCLRERGIDVRFGVDCTQLADVFELHEREFDQIYFIFPHCGRKAGVAKNRELLAKFFQSCADVLAEEGEVHVALCRGQGGTPADKPQREWHNSWQVVAMAALGGLILSDVYPFSCKAVAGYKCTGYRSQDKSFHVEGALNHIFTRSLPFEGSQPRIFRIKLGNQWFSFPEPEALVGKLNRGFLEAPSCHPIKTINEKLIAELGKVFPLKRLKCSYPLLPQEGTSVLPFWNCDFLSAAFWISLHEDNSNSESLTGGTSQDVEDFLVSFSELSLLKNPGRDGKEEACEGTCGQAKICLRPSLLVHVQDVIEVPDFLSGSLHILSGPVFQKCHILPFTMPAFHETLFILGVNQNLKDGCLQSLLDHLKGILDSLLTQTLPESSKLSSLVKFVLQSNGKDYMIRVKTHNFSPDCTEDLIIGSVITSATSVIHKDQCFVFVSMNLDLLAMLVWCISDWRMLWTFDNRFLKNFVPGKIEPFKSHSLYPPCYVHDVSFWIDQKKGFDELEFHTVARAVSQDTIISIQFLSRFQHPKTQQVSLCYRLTYQTCDKALTQQQVASMQSQFRKEIQQHLYVIPR</sequence>
<protein>
    <recommendedName>
        <fullName>Ferredoxin-fold anticodon-binding domain-containing protein 1</fullName>
        <shortName>FDX-ACDB domain-containing protein 1</shortName>
    </recommendedName>
</protein>
<feature type="chain" id="PRO_0000325956" description="Ferredoxin-fold anticodon-binding domain-containing protein 1">
    <location>
        <begin position="1"/>
        <end position="624"/>
    </location>
</feature>
<feature type="domain" description="FDX-ACB" evidence="1">
    <location>
        <begin position="531"/>
        <end position="624"/>
    </location>
</feature>
<feature type="splice variant" id="VSP_056997" description="In isoform 2." evidence="4">
    <location>
        <begin position="1"/>
        <end position="149"/>
    </location>
</feature>
<feature type="sequence variant" id="VAR_062165" description="In dbSNP:rs59164893.">
    <original>T</original>
    <variation>A</variation>
    <location>
        <position position="28"/>
    </location>
</feature>
<feature type="sequence variant" id="VAR_060321" description="In dbSNP:rs611010." evidence="2 3">
    <original>I</original>
    <variation>N</variation>
    <location>
        <position position="87"/>
    </location>
</feature>
<feature type="sequence variant" id="VAR_060322" description="In dbSNP:rs3168263.">
    <original>T</original>
    <variation>P</variation>
    <location>
        <position position="475"/>
    </location>
</feature>
<reference key="1">
    <citation type="journal article" date="2004" name="Nat. Genet.">
        <title>Complete sequencing and characterization of 21,243 full-length human cDNAs.</title>
        <authorList>
            <person name="Ota T."/>
            <person name="Suzuki Y."/>
            <person name="Nishikawa T."/>
            <person name="Otsuki T."/>
            <person name="Sugiyama T."/>
            <person name="Irie R."/>
            <person name="Wakamatsu A."/>
            <person name="Hayashi K."/>
            <person name="Sato H."/>
            <person name="Nagai K."/>
            <person name="Kimura K."/>
            <person name="Makita H."/>
            <person name="Sekine M."/>
            <person name="Obayashi M."/>
            <person name="Nishi T."/>
            <person name="Shibahara T."/>
            <person name="Tanaka T."/>
            <person name="Ishii S."/>
            <person name="Yamamoto J."/>
            <person name="Saito K."/>
            <person name="Kawai Y."/>
            <person name="Isono Y."/>
            <person name="Nakamura Y."/>
            <person name="Nagahari K."/>
            <person name="Murakami K."/>
            <person name="Yasuda T."/>
            <person name="Iwayanagi T."/>
            <person name="Wagatsuma M."/>
            <person name="Shiratori A."/>
            <person name="Sudo H."/>
            <person name="Hosoiri T."/>
            <person name="Kaku Y."/>
            <person name="Kodaira H."/>
            <person name="Kondo H."/>
            <person name="Sugawara M."/>
            <person name="Takahashi M."/>
            <person name="Kanda K."/>
            <person name="Yokoi T."/>
            <person name="Furuya T."/>
            <person name="Kikkawa E."/>
            <person name="Omura Y."/>
            <person name="Abe K."/>
            <person name="Kamihara K."/>
            <person name="Katsuta N."/>
            <person name="Sato K."/>
            <person name="Tanikawa M."/>
            <person name="Yamazaki M."/>
            <person name="Ninomiya K."/>
            <person name="Ishibashi T."/>
            <person name="Yamashita H."/>
            <person name="Murakawa K."/>
            <person name="Fujimori K."/>
            <person name="Tanai H."/>
            <person name="Kimata M."/>
            <person name="Watanabe M."/>
            <person name="Hiraoka S."/>
            <person name="Chiba Y."/>
            <person name="Ishida S."/>
            <person name="Ono Y."/>
            <person name="Takiguchi S."/>
            <person name="Watanabe S."/>
            <person name="Yosida M."/>
            <person name="Hotuta T."/>
            <person name="Kusano J."/>
            <person name="Kanehori K."/>
            <person name="Takahashi-Fujii A."/>
            <person name="Hara H."/>
            <person name="Tanase T.-O."/>
            <person name="Nomura Y."/>
            <person name="Togiya S."/>
            <person name="Komai F."/>
            <person name="Hara R."/>
            <person name="Takeuchi K."/>
            <person name="Arita M."/>
            <person name="Imose N."/>
            <person name="Musashino K."/>
            <person name="Yuuki H."/>
            <person name="Oshima A."/>
            <person name="Sasaki N."/>
            <person name="Aotsuka S."/>
            <person name="Yoshikawa Y."/>
            <person name="Matsunawa H."/>
            <person name="Ichihara T."/>
            <person name="Shiohata N."/>
            <person name="Sano S."/>
            <person name="Moriya S."/>
            <person name="Momiyama H."/>
            <person name="Satoh N."/>
            <person name="Takami S."/>
            <person name="Terashima Y."/>
            <person name="Suzuki O."/>
            <person name="Nakagawa S."/>
            <person name="Senoh A."/>
            <person name="Mizoguchi H."/>
            <person name="Goto Y."/>
            <person name="Shimizu F."/>
            <person name="Wakebe H."/>
            <person name="Hishigaki H."/>
            <person name="Watanabe T."/>
            <person name="Sugiyama A."/>
            <person name="Takemoto M."/>
            <person name="Kawakami B."/>
            <person name="Yamazaki M."/>
            <person name="Watanabe K."/>
            <person name="Kumagai A."/>
            <person name="Itakura S."/>
            <person name="Fukuzumi Y."/>
            <person name="Fujimori Y."/>
            <person name="Komiyama M."/>
            <person name="Tashiro H."/>
            <person name="Tanigami A."/>
            <person name="Fujiwara T."/>
            <person name="Ono T."/>
            <person name="Yamada K."/>
            <person name="Fujii Y."/>
            <person name="Ozaki K."/>
            <person name="Hirao M."/>
            <person name="Ohmori Y."/>
            <person name="Kawabata A."/>
            <person name="Hikiji T."/>
            <person name="Kobatake N."/>
            <person name="Inagaki H."/>
            <person name="Ikema Y."/>
            <person name="Okamoto S."/>
            <person name="Okitani R."/>
            <person name="Kawakami T."/>
            <person name="Noguchi S."/>
            <person name="Itoh T."/>
            <person name="Shigeta K."/>
            <person name="Senba T."/>
            <person name="Matsumura K."/>
            <person name="Nakajima Y."/>
            <person name="Mizuno T."/>
            <person name="Morinaga M."/>
            <person name="Sasaki M."/>
            <person name="Togashi T."/>
            <person name="Oyama M."/>
            <person name="Hata H."/>
            <person name="Watanabe M."/>
            <person name="Komatsu T."/>
            <person name="Mizushima-Sugano J."/>
            <person name="Satoh T."/>
            <person name="Shirai Y."/>
            <person name="Takahashi Y."/>
            <person name="Nakagawa K."/>
            <person name="Okumura K."/>
            <person name="Nagase T."/>
            <person name="Nomura N."/>
            <person name="Kikuchi H."/>
            <person name="Masuho Y."/>
            <person name="Yamashita R."/>
            <person name="Nakai K."/>
            <person name="Yada T."/>
            <person name="Nakamura Y."/>
            <person name="Ohara O."/>
            <person name="Isogai T."/>
            <person name="Sugano S."/>
        </authorList>
    </citation>
    <scope>NUCLEOTIDE SEQUENCE [LARGE SCALE MRNA] (ISOFORM 2)</scope>
</reference>
<reference key="2">
    <citation type="journal article" date="2006" name="Nature">
        <title>Human chromosome 11 DNA sequence and analysis including novel gene identification.</title>
        <authorList>
            <person name="Taylor T.D."/>
            <person name="Noguchi H."/>
            <person name="Totoki Y."/>
            <person name="Toyoda A."/>
            <person name="Kuroki Y."/>
            <person name="Dewar K."/>
            <person name="Lloyd C."/>
            <person name="Itoh T."/>
            <person name="Takeda T."/>
            <person name="Kim D.-W."/>
            <person name="She X."/>
            <person name="Barlow K.F."/>
            <person name="Bloom T."/>
            <person name="Bruford E."/>
            <person name="Chang J.L."/>
            <person name="Cuomo C.A."/>
            <person name="Eichler E."/>
            <person name="FitzGerald M.G."/>
            <person name="Jaffe D.B."/>
            <person name="LaButti K."/>
            <person name="Nicol R."/>
            <person name="Park H.-S."/>
            <person name="Seaman C."/>
            <person name="Sougnez C."/>
            <person name="Yang X."/>
            <person name="Zimmer A.R."/>
            <person name="Zody M.C."/>
            <person name="Birren B.W."/>
            <person name="Nusbaum C."/>
            <person name="Fujiyama A."/>
            <person name="Hattori M."/>
            <person name="Rogers J."/>
            <person name="Lander E.S."/>
            <person name="Sakaki Y."/>
        </authorList>
    </citation>
    <scope>NUCLEOTIDE SEQUENCE [LARGE SCALE GENOMIC DNA]</scope>
</reference>
<reference key="3">
    <citation type="submission" date="2005-07" db="EMBL/GenBank/DDBJ databases">
        <authorList>
            <person name="Mural R.J."/>
            <person name="Istrail S."/>
            <person name="Sutton G.G."/>
            <person name="Florea L."/>
            <person name="Halpern A.L."/>
            <person name="Mobarry C.M."/>
            <person name="Lippert R."/>
            <person name="Walenz B."/>
            <person name="Shatkay H."/>
            <person name="Dew I."/>
            <person name="Miller J.R."/>
            <person name="Flanigan M.J."/>
            <person name="Edwards N.J."/>
            <person name="Bolanos R."/>
            <person name="Fasulo D."/>
            <person name="Halldorsson B.V."/>
            <person name="Hannenhalli S."/>
            <person name="Turner R."/>
            <person name="Yooseph S."/>
            <person name="Lu F."/>
            <person name="Nusskern D.R."/>
            <person name="Shue B.C."/>
            <person name="Zheng X.H."/>
            <person name="Zhong F."/>
            <person name="Delcher A.L."/>
            <person name="Huson D.H."/>
            <person name="Kravitz S.A."/>
            <person name="Mouchard L."/>
            <person name="Reinert K."/>
            <person name="Remington K.A."/>
            <person name="Clark A.G."/>
            <person name="Waterman M.S."/>
            <person name="Eichler E.E."/>
            <person name="Adams M.D."/>
            <person name="Hunkapiller M.W."/>
            <person name="Myers E.W."/>
            <person name="Venter J.C."/>
        </authorList>
    </citation>
    <scope>NUCLEOTIDE SEQUENCE [LARGE SCALE GENOMIC DNA]</scope>
    <scope>VARIANT ASN-87</scope>
</reference>
<reference key="4">
    <citation type="journal article" date="2004" name="Genome Res.">
        <title>The status, quality, and expansion of the NIH full-length cDNA project: the Mammalian Gene Collection (MGC).</title>
        <authorList>
            <consortium name="The MGC Project Team"/>
        </authorList>
    </citation>
    <scope>NUCLEOTIDE SEQUENCE [LARGE SCALE MRNA] (ISOFORM 1)</scope>
    <scope>VARIANT ASN-87</scope>
    <source>
        <tissue>Lymph</tissue>
    </source>
</reference>